<comment type="function">
    <text evidence="1">Catalyzes the dephosphorylation of undecaprenyl diphosphate (UPP). Confers resistance to bacitracin.</text>
</comment>
<comment type="catalytic activity">
    <reaction evidence="1">
        <text>di-trans,octa-cis-undecaprenyl diphosphate + H2O = di-trans,octa-cis-undecaprenyl phosphate + phosphate + H(+)</text>
        <dbReference type="Rhea" id="RHEA:28094"/>
        <dbReference type="ChEBI" id="CHEBI:15377"/>
        <dbReference type="ChEBI" id="CHEBI:15378"/>
        <dbReference type="ChEBI" id="CHEBI:43474"/>
        <dbReference type="ChEBI" id="CHEBI:58405"/>
        <dbReference type="ChEBI" id="CHEBI:60392"/>
        <dbReference type="EC" id="3.6.1.27"/>
    </reaction>
</comment>
<comment type="subcellular location">
    <subcellularLocation>
        <location evidence="1">Cell inner membrane</location>
        <topology evidence="1">Multi-pass membrane protein</topology>
    </subcellularLocation>
</comment>
<comment type="miscellaneous">
    <text>Bacitracin is thought to be involved in the inhibition of peptidoglycan synthesis by sequestering undecaprenyl diphosphate, thereby reducing the pool of lipid carrier available.</text>
</comment>
<comment type="similarity">
    <text evidence="1">Belongs to the UppP family.</text>
</comment>
<accession>B8CJF5</accession>
<dbReference type="EC" id="3.6.1.27" evidence="1"/>
<dbReference type="EMBL" id="CP000472">
    <property type="protein sequence ID" value="ACJ27917.1"/>
    <property type="molecule type" value="Genomic_DNA"/>
</dbReference>
<dbReference type="RefSeq" id="WP_020911295.1">
    <property type="nucleotide sequence ID" value="NC_011566.1"/>
</dbReference>
<dbReference type="SMR" id="B8CJF5"/>
<dbReference type="STRING" id="225849.swp_1120"/>
<dbReference type="KEGG" id="swp:swp_1120"/>
<dbReference type="eggNOG" id="COG1968">
    <property type="taxonomic scope" value="Bacteria"/>
</dbReference>
<dbReference type="HOGENOM" id="CLU_060296_1_0_6"/>
<dbReference type="OrthoDB" id="9808289at2"/>
<dbReference type="Proteomes" id="UP000000753">
    <property type="component" value="Chromosome"/>
</dbReference>
<dbReference type="GO" id="GO:0005886">
    <property type="term" value="C:plasma membrane"/>
    <property type="evidence" value="ECO:0007669"/>
    <property type="project" value="UniProtKB-SubCell"/>
</dbReference>
<dbReference type="GO" id="GO:0050380">
    <property type="term" value="F:undecaprenyl-diphosphatase activity"/>
    <property type="evidence" value="ECO:0007669"/>
    <property type="project" value="UniProtKB-UniRule"/>
</dbReference>
<dbReference type="GO" id="GO:0071555">
    <property type="term" value="P:cell wall organization"/>
    <property type="evidence" value="ECO:0007669"/>
    <property type="project" value="UniProtKB-KW"/>
</dbReference>
<dbReference type="GO" id="GO:0009252">
    <property type="term" value="P:peptidoglycan biosynthetic process"/>
    <property type="evidence" value="ECO:0007669"/>
    <property type="project" value="UniProtKB-KW"/>
</dbReference>
<dbReference type="GO" id="GO:0008360">
    <property type="term" value="P:regulation of cell shape"/>
    <property type="evidence" value="ECO:0007669"/>
    <property type="project" value="UniProtKB-KW"/>
</dbReference>
<dbReference type="GO" id="GO:0046677">
    <property type="term" value="P:response to antibiotic"/>
    <property type="evidence" value="ECO:0007669"/>
    <property type="project" value="UniProtKB-UniRule"/>
</dbReference>
<dbReference type="HAMAP" id="MF_01006">
    <property type="entry name" value="Undec_diphosphatase"/>
    <property type="match status" value="1"/>
</dbReference>
<dbReference type="InterPro" id="IPR003824">
    <property type="entry name" value="UppP"/>
</dbReference>
<dbReference type="NCBIfam" id="NF001393">
    <property type="entry name" value="PRK00281.2-4"/>
    <property type="match status" value="1"/>
</dbReference>
<dbReference type="NCBIfam" id="TIGR00753">
    <property type="entry name" value="undec_PP_bacA"/>
    <property type="match status" value="1"/>
</dbReference>
<dbReference type="PANTHER" id="PTHR30622">
    <property type="entry name" value="UNDECAPRENYL-DIPHOSPHATASE"/>
    <property type="match status" value="1"/>
</dbReference>
<dbReference type="PANTHER" id="PTHR30622:SF4">
    <property type="entry name" value="UNDECAPRENYL-DIPHOSPHATASE"/>
    <property type="match status" value="1"/>
</dbReference>
<dbReference type="Pfam" id="PF02673">
    <property type="entry name" value="BacA"/>
    <property type="match status" value="1"/>
</dbReference>
<name>UPPP_SHEPW</name>
<organism>
    <name type="scientific">Shewanella piezotolerans (strain WP3 / JCM 13877)</name>
    <dbReference type="NCBI Taxonomy" id="225849"/>
    <lineage>
        <taxon>Bacteria</taxon>
        <taxon>Pseudomonadati</taxon>
        <taxon>Pseudomonadota</taxon>
        <taxon>Gammaproteobacteria</taxon>
        <taxon>Alteromonadales</taxon>
        <taxon>Shewanellaceae</taxon>
        <taxon>Shewanella</taxon>
    </lineage>
</organism>
<sequence>MDTFQVIILALIQGLTEFLPISSSAHLILPAQLLDWQDQGLSFDVAVNTGSLLAVVMYFRKELYSMFMAWTGSIASGKQTQESKLSWWIILATIPAVIVGFTAKGFIETYLRNIEVIAATTIIFGLLLWWADRMQRQGFNEFQVGWKKALVIGLAQAMALIPGTSRSGATITAALMLGLSREAAARFSFLMSVPVSLGAAILVTKDLLSSGQAIDYQALGLGIVVSFIAAYVCIHYFLKIISKMGMTPFVIYRLVLGAVLCGFIFL</sequence>
<feature type="chain" id="PRO_1000197404" description="Undecaprenyl-diphosphatase">
    <location>
        <begin position="1"/>
        <end position="266"/>
    </location>
</feature>
<feature type="transmembrane region" description="Helical" evidence="1">
    <location>
        <begin position="1"/>
        <end position="21"/>
    </location>
</feature>
<feature type="transmembrane region" description="Helical" evidence="1">
    <location>
        <begin position="39"/>
        <end position="59"/>
    </location>
</feature>
<feature type="transmembrane region" description="Helical" evidence="1">
    <location>
        <begin position="87"/>
        <end position="107"/>
    </location>
</feature>
<feature type="transmembrane region" description="Helical" evidence="1">
    <location>
        <begin position="111"/>
        <end position="131"/>
    </location>
</feature>
<feature type="transmembrane region" description="Helical" evidence="1">
    <location>
        <begin position="144"/>
        <end position="164"/>
    </location>
</feature>
<feature type="transmembrane region" description="Helical" evidence="1">
    <location>
        <begin position="183"/>
        <end position="203"/>
    </location>
</feature>
<feature type="transmembrane region" description="Helical" evidence="1">
    <location>
        <begin position="218"/>
        <end position="238"/>
    </location>
</feature>
<feature type="transmembrane region" description="Helical" evidence="1">
    <location>
        <begin position="246"/>
        <end position="266"/>
    </location>
</feature>
<evidence type="ECO:0000255" key="1">
    <source>
        <dbReference type="HAMAP-Rule" id="MF_01006"/>
    </source>
</evidence>
<gene>
    <name evidence="1" type="primary">uppP</name>
    <name type="ordered locus">swp_1120</name>
</gene>
<keyword id="KW-0046">Antibiotic resistance</keyword>
<keyword id="KW-0997">Cell inner membrane</keyword>
<keyword id="KW-1003">Cell membrane</keyword>
<keyword id="KW-0133">Cell shape</keyword>
<keyword id="KW-0961">Cell wall biogenesis/degradation</keyword>
<keyword id="KW-0378">Hydrolase</keyword>
<keyword id="KW-0472">Membrane</keyword>
<keyword id="KW-0573">Peptidoglycan synthesis</keyword>
<keyword id="KW-0812">Transmembrane</keyword>
<keyword id="KW-1133">Transmembrane helix</keyword>
<reference key="1">
    <citation type="journal article" date="2008" name="PLoS ONE">
        <title>Environmental adaptation: genomic analysis of the piezotolerant and psychrotolerant deep-sea iron reducing bacterium Shewanella piezotolerans WP3.</title>
        <authorList>
            <person name="Wang F."/>
            <person name="Wang J."/>
            <person name="Jian H."/>
            <person name="Zhang B."/>
            <person name="Li S."/>
            <person name="Wang F."/>
            <person name="Zeng X."/>
            <person name="Gao L."/>
            <person name="Bartlett D.H."/>
            <person name="Yu J."/>
            <person name="Hu S."/>
            <person name="Xiao X."/>
        </authorList>
    </citation>
    <scope>NUCLEOTIDE SEQUENCE [LARGE SCALE GENOMIC DNA]</scope>
    <source>
        <strain>WP3 / JCM 13877</strain>
    </source>
</reference>
<proteinExistence type="inferred from homology"/>
<protein>
    <recommendedName>
        <fullName evidence="1">Undecaprenyl-diphosphatase</fullName>
        <ecNumber evidence="1">3.6.1.27</ecNumber>
    </recommendedName>
    <alternativeName>
        <fullName evidence="1">Bacitracin resistance protein</fullName>
    </alternativeName>
    <alternativeName>
        <fullName evidence="1">Undecaprenyl pyrophosphate phosphatase</fullName>
    </alternativeName>
</protein>